<protein>
    <recommendedName>
        <fullName evidence="1">Large ribosomal subunit protein bL9</fullName>
    </recommendedName>
    <alternativeName>
        <fullName evidence="2">50S ribosomal protein L9</fullName>
    </alternativeName>
</protein>
<evidence type="ECO:0000255" key="1">
    <source>
        <dbReference type="HAMAP-Rule" id="MF_00503"/>
    </source>
</evidence>
<evidence type="ECO:0000305" key="2"/>
<proteinExistence type="inferred from homology"/>
<comment type="function">
    <text evidence="1">Binds to the 23S rRNA.</text>
</comment>
<comment type="similarity">
    <text evidence="1">Belongs to the bacterial ribosomal protein bL9 family.</text>
</comment>
<reference key="1">
    <citation type="submission" date="2006-09" db="EMBL/GenBank/DDBJ databases">
        <title>Complete sequence of Rhodopseudomonas palustris BisA53.</title>
        <authorList>
            <consortium name="US DOE Joint Genome Institute"/>
            <person name="Copeland A."/>
            <person name="Lucas S."/>
            <person name="Lapidus A."/>
            <person name="Barry K."/>
            <person name="Detter J.C."/>
            <person name="Glavina del Rio T."/>
            <person name="Hammon N."/>
            <person name="Israni S."/>
            <person name="Dalin E."/>
            <person name="Tice H."/>
            <person name="Pitluck S."/>
            <person name="Chain P."/>
            <person name="Malfatti S."/>
            <person name="Shin M."/>
            <person name="Vergez L."/>
            <person name="Schmutz J."/>
            <person name="Larimer F."/>
            <person name="Land M."/>
            <person name="Hauser L."/>
            <person name="Pelletier D.A."/>
            <person name="Kyrpides N."/>
            <person name="Kim E."/>
            <person name="Harwood C.S."/>
            <person name="Oda Y."/>
            <person name="Richardson P."/>
        </authorList>
    </citation>
    <scope>NUCLEOTIDE SEQUENCE [LARGE SCALE GENOMIC DNA]</scope>
    <source>
        <strain>BisA53</strain>
    </source>
</reference>
<feature type="chain" id="PRO_1000014844" description="Large ribosomal subunit protein bL9">
    <location>
        <begin position="1"/>
        <end position="194"/>
    </location>
</feature>
<accession>Q07LD6</accession>
<sequence length="194" mass="21053">MEVILLERVAKLGQMGEVVKVKDGYARNFLLPRGKALRATADNKGKFEHMKADLEARNLAAKEEATKVAEKIDGRNVVVLRQASESGQLFGSVTVRDIIASFAADGIQISRSQVLLDMAVKTIGKHQIAIAVHPEVEVAVSVTVARSVDEAERINRGEDISTKREDKDAAAEAIAAAGEFFDPDAMHEDEATEQ</sequence>
<name>RL9_RHOP5</name>
<keyword id="KW-0687">Ribonucleoprotein</keyword>
<keyword id="KW-0689">Ribosomal protein</keyword>
<keyword id="KW-0694">RNA-binding</keyword>
<keyword id="KW-0699">rRNA-binding</keyword>
<organism>
    <name type="scientific">Rhodopseudomonas palustris (strain BisA53)</name>
    <dbReference type="NCBI Taxonomy" id="316055"/>
    <lineage>
        <taxon>Bacteria</taxon>
        <taxon>Pseudomonadati</taxon>
        <taxon>Pseudomonadota</taxon>
        <taxon>Alphaproteobacteria</taxon>
        <taxon>Hyphomicrobiales</taxon>
        <taxon>Nitrobacteraceae</taxon>
        <taxon>Rhodopseudomonas</taxon>
    </lineage>
</organism>
<gene>
    <name evidence="1" type="primary">rplI</name>
    <name type="ordered locus">RPE_3315</name>
</gene>
<dbReference type="EMBL" id="CP000463">
    <property type="protein sequence ID" value="ABJ07248.1"/>
    <property type="molecule type" value="Genomic_DNA"/>
</dbReference>
<dbReference type="SMR" id="Q07LD6"/>
<dbReference type="STRING" id="316055.RPE_3315"/>
<dbReference type="KEGG" id="rpe:RPE_3315"/>
<dbReference type="eggNOG" id="COG0359">
    <property type="taxonomic scope" value="Bacteria"/>
</dbReference>
<dbReference type="HOGENOM" id="CLU_078938_1_0_5"/>
<dbReference type="OrthoDB" id="9788336at2"/>
<dbReference type="GO" id="GO:1990904">
    <property type="term" value="C:ribonucleoprotein complex"/>
    <property type="evidence" value="ECO:0007669"/>
    <property type="project" value="UniProtKB-KW"/>
</dbReference>
<dbReference type="GO" id="GO:0005840">
    <property type="term" value="C:ribosome"/>
    <property type="evidence" value="ECO:0007669"/>
    <property type="project" value="UniProtKB-KW"/>
</dbReference>
<dbReference type="GO" id="GO:0019843">
    <property type="term" value="F:rRNA binding"/>
    <property type="evidence" value="ECO:0007669"/>
    <property type="project" value="UniProtKB-UniRule"/>
</dbReference>
<dbReference type="GO" id="GO:0003735">
    <property type="term" value="F:structural constituent of ribosome"/>
    <property type="evidence" value="ECO:0007669"/>
    <property type="project" value="InterPro"/>
</dbReference>
<dbReference type="GO" id="GO:0006412">
    <property type="term" value="P:translation"/>
    <property type="evidence" value="ECO:0007669"/>
    <property type="project" value="UniProtKB-UniRule"/>
</dbReference>
<dbReference type="Gene3D" id="3.10.430.100">
    <property type="entry name" value="Ribosomal protein L9, C-terminal domain"/>
    <property type="match status" value="1"/>
</dbReference>
<dbReference type="Gene3D" id="3.40.5.10">
    <property type="entry name" value="Ribosomal protein L9, N-terminal domain"/>
    <property type="match status" value="1"/>
</dbReference>
<dbReference type="HAMAP" id="MF_00503">
    <property type="entry name" value="Ribosomal_bL9"/>
    <property type="match status" value="1"/>
</dbReference>
<dbReference type="InterPro" id="IPR000244">
    <property type="entry name" value="Ribosomal_bL9"/>
</dbReference>
<dbReference type="InterPro" id="IPR009027">
    <property type="entry name" value="Ribosomal_bL9/RNase_H1_N"/>
</dbReference>
<dbReference type="InterPro" id="IPR020594">
    <property type="entry name" value="Ribosomal_bL9_bac/chp"/>
</dbReference>
<dbReference type="InterPro" id="IPR020069">
    <property type="entry name" value="Ribosomal_bL9_C"/>
</dbReference>
<dbReference type="InterPro" id="IPR036791">
    <property type="entry name" value="Ribosomal_bL9_C_sf"/>
</dbReference>
<dbReference type="InterPro" id="IPR020070">
    <property type="entry name" value="Ribosomal_bL9_N"/>
</dbReference>
<dbReference type="InterPro" id="IPR036935">
    <property type="entry name" value="Ribosomal_bL9_N_sf"/>
</dbReference>
<dbReference type="NCBIfam" id="TIGR00158">
    <property type="entry name" value="L9"/>
    <property type="match status" value="1"/>
</dbReference>
<dbReference type="PANTHER" id="PTHR21368">
    <property type="entry name" value="50S RIBOSOMAL PROTEIN L9"/>
    <property type="match status" value="1"/>
</dbReference>
<dbReference type="Pfam" id="PF03948">
    <property type="entry name" value="Ribosomal_L9_C"/>
    <property type="match status" value="1"/>
</dbReference>
<dbReference type="Pfam" id="PF01281">
    <property type="entry name" value="Ribosomal_L9_N"/>
    <property type="match status" value="1"/>
</dbReference>
<dbReference type="SUPFAM" id="SSF55658">
    <property type="entry name" value="L9 N-domain-like"/>
    <property type="match status" value="1"/>
</dbReference>
<dbReference type="SUPFAM" id="SSF55653">
    <property type="entry name" value="Ribosomal protein L9 C-domain"/>
    <property type="match status" value="1"/>
</dbReference>
<dbReference type="PROSITE" id="PS00651">
    <property type="entry name" value="RIBOSOMAL_L9"/>
    <property type="match status" value="1"/>
</dbReference>